<protein>
    <recommendedName>
        <fullName>Ubiquitin carboxyl-terminal hydrolase 19</fullName>
        <ecNumber>3.4.19.12</ecNumber>
    </recommendedName>
    <alternativeName>
        <fullName>Deubiquitinating enzyme 19</fullName>
    </alternativeName>
    <alternativeName>
        <fullName>Ubiquitin thioesterase 19</fullName>
    </alternativeName>
    <alternativeName>
        <fullName>Ubiquitin-specific-processing protease 19</fullName>
    </alternativeName>
</protein>
<feature type="chain" id="PRO_0000295158" description="Ubiquitin carboxyl-terminal hydrolase 19">
    <location>
        <begin position="1"/>
        <end position="1357"/>
    </location>
</feature>
<feature type="topological domain" description="Cytoplasmic" evidence="3">
    <location>
        <begin position="1"/>
        <end position="1330"/>
    </location>
</feature>
<feature type="transmembrane region" description="Helical" evidence="3">
    <location>
        <begin position="1331"/>
        <end position="1351"/>
    </location>
</feature>
<feature type="topological domain" description="Lumenal" evidence="3">
    <location>
        <begin position="1352"/>
        <end position="1357"/>
    </location>
</feature>
<feature type="domain" description="CS 1" evidence="5">
    <location>
        <begin position="51"/>
        <end position="140"/>
    </location>
</feature>
<feature type="domain" description="CS 2" evidence="5">
    <location>
        <begin position="321"/>
        <end position="423"/>
    </location>
</feature>
<feature type="domain" description="USP">
    <location>
        <begin position="536"/>
        <end position="1253"/>
    </location>
</feature>
<feature type="zinc finger region" description="MYND-type" evidence="4">
    <location>
        <begin position="830"/>
        <end position="872"/>
    </location>
</feature>
<feature type="region of interest" description="Disordered" evidence="8">
    <location>
        <begin position="1"/>
        <end position="52"/>
    </location>
</feature>
<feature type="region of interest" description="Disordered" evidence="8">
    <location>
        <begin position="162"/>
        <end position="239"/>
    </location>
</feature>
<feature type="region of interest" description="Disordered" evidence="8">
    <location>
        <begin position="275"/>
        <end position="296"/>
    </location>
</feature>
<feature type="region of interest" description="Disordered" evidence="8">
    <location>
        <begin position="432"/>
        <end position="479"/>
    </location>
</feature>
<feature type="region of interest" description="Disordered" evidence="8">
    <location>
        <begin position="962"/>
        <end position="981"/>
    </location>
</feature>
<feature type="region of interest" description="Disordered" evidence="8">
    <location>
        <begin position="1259"/>
        <end position="1278"/>
    </location>
</feature>
<feature type="region of interest" description="Disordered" evidence="8">
    <location>
        <begin position="1292"/>
        <end position="1320"/>
    </location>
</feature>
<feature type="compositionally biased region" description="Basic and acidic residues" evidence="8">
    <location>
        <begin position="28"/>
        <end position="52"/>
    </location>
</feature>
<feature type="compositionally biased region" description="Basic and acidic residues" evidence="8">
    <location>
        <begin position="171"/>
        <end position="182"/>
    </location>
</feature>
<feature type="compositionally biased region" description="Low complexity" evidence="8">
    <location>
        <begin position="194"/>
        <end position="206"/>
    </location>
</feature>
<feature type="compositionally biased region" description="Low complexity" evidence="8">
    <location>
        <begin position="437"/>
        <end position="457"/>
    </location>
</feature>
<feature type="compositionally biased region" description="Basic and acidic residues" evidence="8">
    <location>
        <begin position="459"/>
        <end position="475"/>
    </location>
</feature>
<feature type="compositionally biased region" description="Basic and acidic residues" evidence="8">
    <location>
        <begin position="1259"/>
        <end position="1271"/>
    </location>
</feature>
<feature type="active site" description="Nucleophile" evidence="6 7">
    <location>
        <position position="545"/>
    </location>
</feature>
<feature type="active site" description="Proton acceptor" evidence="6 7">
    <location>
        <position position="1204"/>
    </location>
</feature>
<feature type="binding site" evidence="4">
    <location>
        <position position="830"/>
    </location>
    <ligand>
        <name>Zn(2+)</name>
        <dbReference type="ChEBI" id="CHEBI:29105"/>
        <label>1</label>
    </ligand>
</feature>
<feature type="binding site" evidence="4">
    <location>
        <position position="833"/>
    </location>
    <ligand>
        <name>Zn(2+)</name>
        <dbReference type="ChEBI" id="CHEBI:29105"/>
        <label>1</label>
    </ligand>
</feature>
<feature type="binding site" evidence="4">
    <location>
        <position position="847"/>
    </location>
    <ligand>
        <name>Zn(2+)</name>
        <dbReference type="ChEBI" id="CHEBI:29105"/>
        <label>2</label>
    </ligand>
</feature>
<feature type="binding site" evidence="4">
    <location>
        <position position="850"/>
    </location>
    <ligand>
        <name>Zn(2+)</name>
        <dbReference type="ChEBI" id="CHEBI:29105"/>
        <label>2</label>
    </ligand>
</feature>
<feature type="binding site" evidence="4">
    <location>
        <position position="856"/>
    </location>
    <ligand>
        <name>Zn(2+)</name>
        <dbReference type="ChEBI" id="CHEBI:29105"/>
        <label>1</label>
    </ligand>
</feature>
<feature type="binding site" evidence="4">
    <location>
        <position position="860"/>
    </location>
    <ligand>
        <name>Zn(2+)</name>
        <dbReference type="ChEBI" id="CHEBI:29105"/>
        <label>1</label>
    </ligand>
</feature>
<feature type="binding site" evidence="4">
    <location>
        <position position="868"/>
    </location>
    <ligand>
        <name>Zn(2+)</name>
        <dbReference type="ChEBI" id="CHEBI:29105"/>
        <label>2</label>
    </ligand>
</feature>
<feature type="binding site" evidence="4">
    <location>
        <position position="872"/>
    </location>
    <ligand>
        <name>Zn(2+)</name>
        <dbReference type="ChEBI" id="CHEBI:29105"/>
        <label>2</label>
    </ligand>
</feature>
<feature type="modified residue" description="Phosphoserine" evidence="2">
    <location>
        <position position="221"/>
    </location>
</feature>
<feature type="modified residue" description="Phosphoserine" evidence="12">
    <location>
        <position position="283"/>
    </location>
</feature>
<feature type="mutagenesis site" description="Has a destabilizing effect on RNF123." evidence="10">
    <original>C</original>
    <variation>A</variation>
    <location>
        <position position="545"/>
    </location>
</feature>
<organism>
    <name type="scientific">Rattus norvegicus</name>
    <name type="common">Rat</name>
    <dbReference type="NCBI Taxonomy" id="10116"/>
    <lineage>
        <taxon>Eukaryota</taxon>
        <taxon>Metazoa</taxon>
        <taxon>Chordata</taxon>
        <taxon>Craniata</taxon>
        <taxon>Vertebrata</taxon>
        <taxon>Euteleostomi</taxon>
        <taxon>Mammalia</taxon>
        <taxon>Eutheria</taxon>
        <taxon>Euarchontoglires</taxon>
        <taxon>Glires</taxon>
        <taxon>Rodentia</taxon>
        <taxon>Myomorpha</taxon>
        <taxon>Muroidea</taxon>
        <taxon>Muridae</taxon>
        <taxon>Murinae</taxon>
        <taxon>Rattus</taxon>
    </lineage>
</organism>
<accession>Q6J1Y9</accession>
<sequence length="1357" mass="150302">MSAGTSATGPRRGPPGLEEATSKKKQKDRANQESKDGDPRRVSMPRKEPTKDELLLDWRQSSDKVVVKLRVGTGPICLEEVDAAFTDTDCVVRLPDGRQWGGVFFAKIQSSCTKVQTRKGGLLQLALPKKVPLLTWPSLLKKPLGTQELVPGLRCQENGQELSPIALEPGSEPRRAKQEARNQKRAQGRGEVGSGASPGAQAGPSAKRAVHLCRGPEGEGSMDGPGPQGDAPSFLSDSATQVEAEEQLHVPPVNPQTSLLGSEKNLALLTVEKTVSPRSDSVSPVMIRNRDPEKDDHFKEEMAVGADPAALADEPESMVNLAFVKNDSYEKGPDSVVVHVYVKESRRDTSRVLFREQDFTLIFQTRDGNFLRLHPGCGPHTIFRWQVKLRNLIEPEQCTFCFTASRIDICLRKRQSQRWGGLEAPATRVGGAKVAVPTGPTPLDSTPPGGGPLPLTGQEEARAVEKEKPKARSEDSGLDGVVARTPLEHVTPKPEPHLASPKPTCMVPPMPHSPVSGDSVEEDEEEEKKVCLPGFTGLVNLGNTCFMNSVIQSLSNTRELRDFFHDRSFEAEINYNNPLGTGGRLAIGFAVLLRALWKGTHQAFQPSKLKAIVASKASQFTGYAQHDAQEFMAFLLDGLHEDLNRIQNKPYTETVDSDGRPDEVVAEEAWQRHKMRNDSFIVDLFQGQYKSKLVCPVCAKVSITFDPFLYLPVPLPQKQKVLPIYYFAREPHSKPIKFLVSVSKENSSASEVLESLSQSVHVKPESLRLAEVIKNRFHRVFLPSHSLDAVSPTDVLLCFELLSPELAKERVVVLEVQQRPQVPSIPISKCAACQRKQQSEDEKLKRCTRCYRVGYCNQFCQKTHWPDHKGLCRPENIGYPFLVSVPASRLTYARLAQLLEGYARYSVSVFQPPFQPGRMALESQSPGCTTLLSTSSLEAGDSEREPIQPSELQLVTPVAEGDTGAHRMWPPADRGPVPSTSGISSEMLASGPMEGCSLLAGERVSRPEAAVPGYQHSRESVSAHTPQFFIYKIDASSREQRLEDKGDTPLELGDDCSLALVWRNNERLQEFVLVASKELECAEDPGSAGEAARAGHFTLDQCLNLFTRPEVLAPEEAWYCPQCKQHREASKQLLLWRLPNVLIVQLKRFSFRSFIWRDKINDLVEFPVRNLDLSKFCIGQKEEQLPSYDLYAVINHYGGMIGGHYTACARLPSDRSSQRSDVGWRLFDDSTVTTVDESQVVTRYAYVLFYRRRNSPVERPPRAAHAEHHPDLGPAAEAAASQASRIWQELEAEEEMVPEGPGPLGPWGPQDWVGPPPRGPTTSDEGCLRYFVLGTVAALVALVLNVFYPLVSQSRWR</sequence>
<keyword id="KW-0903">Direct protein sequencing</keyword>
<keyword id="KW-0256">Endoplasmic reticulum</keyword>
<keyword id="KW-0378">Hydrolase</keyword>
<keyword id="KW-0472">Membrane</keyword>
<keyword id="KW-0479">Metal-binding</keyword>
<keyword id="KW-0597">Phosphoprotein</keyword>
<keyword id="KW-0645">Protease</keyword>
<keyword id="KW-1185">Reference proteome</keyword>
<keyword id="KW-0677">Repeat</keyword>
<keyword id="KW-0788">Thiol protease</keyword>
<keyword id="KW-0812">Transmembrane</keyword>
<keyword id="KW-1133">Transmembrane helix</keyword>
<keyword id="KW-0833">Ubl conjugation pathway</keyword>
<keyword id="KW-0862">Zinc</keyword>
<keyword id="KW-0863">Zinc-finger</keyword>
<evidence type="ECO:0000250" key="1">
    <source>
        <dbReference type="UniProtKB" id="O94966"/>
    </source>
</evidence>
<evidence type="ECO:0000250" key="2">
    <source>
        <dbReference type="UniProtKB" id="Q3UJD6"/>
    </source>
</evidence>
<evidence type="ECO:0000255" key="3"/>
<evidence type="ECO:0000255" key="4">
    <source>
        <dbReference type="PROSITE-ProRule" id="PRU00134"/>
    </source>
</evidence>
<evidence type="ECO:0000255" key="5">
    <source>
        <dbReference type="PROSITE-ProRule" id="PRU00547"/>
    </source>
</evidence>
<evidence type="ECO:0000255" key="6">
    <source>
        <dbReference type="PROSITE-ProRule" id="PRU10092"/>
    </source>
</evidence>
<evidence type="ECO:0000255" key="7">
    <source>
        <dbReference type="PROSITE-ProRule" id="PRU10093"/>
    </source>
</evidence>
<evidence type="ECO:0000256" key="8">
    <source>
        <dbReference type="SAM" id="MobiDB-lite"/>
    </source>
</evidence>
<evidence type="ECO:0000269" key="9">
    <source>
    </source>
</evidence>
<evidence type="ECO:0000269" key="10">
    <source>
    </source>
</evidence>
<evidence type="ECO:0000269" key="11">
    <source>
    </source>
</evidence>
<evidence type="ECO:0007744" key="12">
    <source>
    </source>
</evidence>
<dbReference type="EC" id="3.4.19.12"/>
<dbReference type="EMBL" id="AY605065">
    <property type="protein sequence ID" value="AAT35219.1"/>
    <property type="molecule type" value="mRNA"/>
</dbReference>
<dbReference type="RefSeq" id="NP_001001516.1">
    <property type="nucleotide sequence ID" value="NM_001001516.2"/>
</dbReference>
<dbReference type="SMR" id="Q6J1Y9"/>
<dbReference type="FunCoup" id="Q6J1Y9">
    <property type="interactions" value="2328"/>
</dbReference>
<dbReference type="STRING" id="10116.ENSRNOP00000067744"/>
<dbReference type="MEROPS" id="C19.024"/>
<dbReference type="GlyGen" id="Q6J1Y9">
    <property type="glycosylation" value="2 sites"/>
</dbReference>
<dbReference type="iPTMnet" id="Q6J1Y9"/>
<dbReference type="PhosphoSitePlus" id="Q6J1Y9"/>
<dbReference type="PaxDb" id="10116-ENSRNOP00000067744"/>
<dbReference type="GeneID" id="361190"/>
<dbReference type="KEGG" id="rno:361190"/>
<dbReference type="AGR" id="RGD:1303276"/>
<dbReference type="CTD" id="10869"/>
<dbReference type="RGD" id="1303276">
    <property type="gene designation" value="Usp19"/>
</dbReference>
<dbReference type="eggNOG" id="KOG1870">
    <property type="taxonomic scope" value="Eukaryota"/>
</dbReference>
<dbReference type="InParanoid" id="Q6J1Y9"/>
<dbReference type="PhylomeDB" id="Q6J1Y9"/>
<dbReference type="BRENDA" id="3.4.19.12">
    <property type="organism ID" value="5301"/>
</dbReference>
<dbReference type="Reactome" id="R-RNO-5689880">
    <property type="pathway name" value="Ub-specific processing proteases"/>
</dbReference>
<dbReference type="PRO" id="PR:Q6J1Y9"/>
<dbReference type="Proteomes" id="UP000002494">
    <property type="component" value="Unplaced"/>
</dbReference>
<dbReference type="GO" id="GO:0005829">
    <property type="term" value="C:cytosol"/>
    <property type="evidence" value="ECO:0000266"/>
    <property type="project" value="RGD"/>
</dbReference>
<dbReference type="GO" id="GO:0005789">
    <property type="term" value="C:endoplasmic reticulum membrane"/>
    <property type="evidence" value="ECO:0000250"/>
    <property type="project" value="UniProtKB"/>
</dbReference>
<dbReference type="GO" id="GO:0004843">
    <property type="term" value="F:cysteine-type deubiquitinase activity"/>
    <property type="evidence" value="ECO:0000250"/>
    <property type="project" value="UniProtKB"/>
</dbReference>
<dbReference type="GO" id="GO:0051879">
    <property type="term" value="F:Hsp90 protein binding"/>
    <property type="evidence" value="ECO:0000266"/>
    <property type="project" value="RGD"/>
</dbReference>
<dbReference type="GO" id="GO:1990380">
    <property type="term" value="F:K48-linked deubiquitinase activity"/>
    <property type="evidence" value="ECO:0000266"/>
    <property type="project" value="RGD"/>
</dbReference>
<dbReference type="GO" id="GO:0031625">
    <property type="term" value="F:ubiquitin protein ligase binding"/>
    <property type="evidence" value="ECO:0000266"/>
    <property type="project" value="RGD"/>
</dbReference>
<dbReference type="GO" id="GO:0008270">
    <property type="term" value="F:zinc ion binding"/>
    <property type="evidence" value="ECO:0007669"/>
    <property type="project" value="UniProtKB-KW"/>
</dbReference>
<dbReference type="GO" id="GO:0036503">
    <property type="term" value="P:ERAD pathway"/>
    <property type="evidence" value="ECO:0000250"/>
    <property type="project" value="UniProtKB"/>
</dbReference>
<dbReference type="GO" id="GO:1901799">
    <property type="term" value="P:negative regulation of proteasomal protein catabolic process"/>
    <property type="evidence" value="ECO:0000266"/>
    <property type="project" value="RGD"/>
</dbReference>
<dbReference type="GO" id="GO:0048642">
    <property type="term" value="P:negative regulation of skeletal muscle tissue development"/>
    <property type="evidence" value="ECO:0000250"/>
    <property type="project" value="UniProtKB"/>
</dbReference>
<dbReference type="GO" id="GO:0090068">
    <property type="term" value="P:positive regulation of cell cycle process"/>
    <property type="evidence" value="ECO:0000315"/>
    <property type="project" value="UniProtKB"/>
</dbReference>
<dbReference type="GO" id="GO:0016579">
    <property type="term" value="P:protein deubiquitination"/>
    <property type="evidence" value="ECO:0000315"/>
    <property type="project" value="UniProtKB"/>
</dbReference>
<dbReference type="GO" id="GO:0071108">
    <property type="term" value="P:protein K48-linked deubiquitination"/>
    <property type="evidence" value="ECO:0000266"/>
    <property type="project" value="RGD"/>
</dbReference>
<dbReference type="GO" id="GO:0050821">
    <property type="term" value="P:protein stabilization"/>
    <property type="evidence" value="ECO:0000266"/>
    <property type="project" value="RGD"/>
</dbReference>
<dbReference type="GO" id="GO:1900037">
    <property type="term" value="P:regulation of cellular response to hypoxia"/>
    <property type="evidence" value="ECO:0000250"/>
    <property type="project" value="UniProtKB"/>
</dbReference>
<dbReference type="GO" id="GO:1904292">
    <property type="term" value="P:regulation of ERAD pathway"/>
    <property type="evidence" value="ECO:0000266"/>
    <property type="project" value="RGD"/>
</dbReference>
<dbReference type="GO" id="GO:0031647">
    <property type="term" value="P:regulation of protein stability"/>
    <property type="evidence" value="ECO:0000314"/>
    <property type="project" value="UniProtKB"/>
</dbReference>
<dbReference type="GO" id="GO:0034976">
    <property type="term" value="P:response to endoplasmic reticulum stress"/>
    <property type="evidence" value="ECO:0000250"/>
    <property type="project" value="UniProtKB"/>
</dbReference>
<dbReference type="CDD" id="cd06466">
    <property type="entry name" value="p23_CS_SGT1_like"/>
    <property type="match status" value="1"/>
</dbReference>
<dbReference type="CDD" id="cd06463">
    <property type="entry name" value="p23_like"/>
    <property type="match status" value="1"/>
</dbReference>
<dbReference type="CDD" id="cd02674">
    <property type="entry name" value="Peptidase_C19R"/>
    <property type="match status" value="1"/>
</dbReference>
<dbReference type="FunFam" id="3.90.70.10:FF:000012">
    <property type="entry name" value="ubiquitin carboxyl-terminal hydrolase 19 isoform X2"/>
    <property type="match status" value="1"/>
</dbReference>
<dbReference type="FunFam" id="3.90.70.10:FF:000020">
    <property type="entry name" value="ubiquitin carboxyl-terminal hydrolase 19 isoform X4"/>
    <property type="match status" value="1"/>
</dbReference>
<dbReference type="FunFam" id="2.60.40.790:FF:000004">
    <property type="entry name" value="ubiquitin carboxyl-terminal hydrolase 19 isoform X9"/>
    <property type="match status" value="1"/>
</dbReference>
<dbReference type="FunFam" id="6.10.140.2220:FF:000004">
    <property type="entry name" value="ubiquitin carboxyl-terminal hydrolase 19 isoform X9"/>
    <property type="match status" value="1"/>
</dbReference>
<dbReference type="Gene3D" id="2.60.40.790">
    <property type="match status" value="2"/>
</dbReference>
<dbReference type="Gene3D" id="6.10.140.2220">
    <property type="match status" value="1"/>
</dbReference>
<dbReference type="Gene3D" id="3.90.70.10">
    <property type="entry name" value="Cysteine proteinases"/>
    <property type="match status" value="2"/>
</dbReference>
<dbReference type="InterPro" id="IPR007052">
    <property type="entry name" value="CS_dom"/>
</dbReference>
<dbReference type="InterPro" id="IPR008978">
    <property type="entry name" value="HSP20-like_chaperone"/>
</dbReference>
<dbReference type="InterPro" id="IPR038765">
    <property type="entry name" value="Papain-like_cys_pep_sf"/>
</dbReference>
<dbReference type="InterPro" id="IPR001394">
    <property type="entry name" value="Peptidase_C19_UCH"/>
</dbReference>
<dbReference type="InterPro" id="IPR050185">
    <property type="entry name" value="Ub_carboxyl-term_hydrolase"/>
</dbReference>
<dbReference type="InterPro" id="IPR018200">
    <property type="entry name" value="USP_CS"/>
</dbReference>
<dbReference type="InterPro" id="IPR028889">
    <property type="entry name" value="USP_dom"/>
</dbReference>
<dbReference type="InterPro" id="IPR002893">
    <property type="entry name" value="Znf_MYND"/>
</dbReference>
<dbReference type="PANTHER" id="PTHR21646">
    <property type="entry name" value="UBIQUITIN CARBOXYL-TERMINAL HYDROLASE"/>
    <property type="match status" value="1"/>
</dbReference>
<dbReference type="PANTHER" id="PTHR21646:SF74">
    <property type="entry name" value="UBIQUITIN CARBOXYL-TERMINAL HYDROLASE 19"/>
    <property type="match status" value="1"/>
</dbReference>
<dbReference type="Pfam" id="PF04969">
    <property type="entry name" value="CS"/>
    <property type="match status" value="1"/>
</dbReference>
<dbReference type="Pfam" id="PF00443">
    <property type="entry name" value="UCH"/>
    <property type="match status" value="1"/>
</dbReference>
<dbReference type="Pfam" id="PF16602">
    <property type="entry name" value="USP19_linker"/>
    <property type="match status" value="1"/>
</dbReference>
<dbReference type="Pfam" id="PF01753">
    <property type="entry name" value="zf-MYND"/>
    <property type="match status" value="1"/>
</dbReference>
<dbReference type="SUPFAM" id="SSF54001">
    <property type="entry name" value="Cysteine proteinases"/>
    <property type="match status" value="1"/>
</dbReference>
<dbReference type="SUPFAM" id="SSF144232">
    <property type="entry name" value="HIT/MYND zinc finger-like"/>
    <property type="match status" value="1"/>
</dbReference>
<dbReference type="SUPFAM" id="SSF49764">
    <property type="entry name" value="HSP20-like chaperones"/>
    <property type="match status" value="2"/>
</dbReference>
<dbReference type="PROSITE" id="PS51203">
    <property type="entry name" value="CS"/>
    <property type="match status" value="2"/>
</dbReference>
<dbReference type="PROSITE" id="PS00972">
    <property type="entry name" value="USP_1"/>
    <property type="match status" value="1"/>
</dbReference>
<dbReference type="PROSITE" id="PS00973">
    <property type="entry name" value="USP_2"/>
    <property type="match status" value="1"/>
</dbReference>
<dbReference type="PROSITE" id="PS50235">
    <property type="entry name" value="USP_3"/>
    <property type="match status" value="1"/>
</dbReference>
<dbReference type="PROSITE" id="PS01360">
    <property type="entry name" value="ZF_MYND_1"/>
    <property type="match status" value="1"/>
</dbReference>
<dbReference type="PROSITE" id="PS50865">
    <property type="entry name" value="ZF_MYND_2"/>
    <property type="match status" value="1"/>
</dbReference>
<reference key="1">
    <citation type="journal article" date="2005" name="Am. J. Physiol.">
        <title>USP19 is a ubiquitin-specific protease regulated in rat skeletal muscle during catabolic states.</title>
        <authorList>
            <person name="Combaret L."/>
            <person name="Adegoke O.A.J."/>
            <person name="Bedard N."/>
            <person name="Baracos V."/>
            <person name="Attaix D."/>
            <person name="Wing S.S."/>
        </authorList>
    </citation>
    <scope>NUCLEOTIDE SEQUENCE [MRNA]</scope>
    <scope>TISSUE SPECIFICITY</scope>
    <scope>INDUCTION</scope>
    <source>
        <strain>Sprague-Dawley</strain>
        <tissue>Testis</tissue>
    </source>
</reference>
<reference key="2">
    <citation type="submission" date="2007-09" db="UniProtKB">
        <authorList>
            <person name="Lubec G."/>
            <person name="Kang S.U."/>
            <person name="Lubec S."/>
        </authorList>
    </citation>
    <scope>PROTEIN SEQUENCE OF 2-11; 60-76 AND 837-845</scope>
    <scope>IDENTIFICATION BY MASS SPECTROMETRY</scope>
    <source>
        <strain>Sprague-Dawley</strain>
        <tissue>Brain</tissue>
    </source>
</reference>
<reference key="3">
    <citation type="journal article" date="2009" name="Am. J. Physiol.">
        <title>USP19-deubiquitinating enzyme regulates levels of major myofibrillar proteins in L6 muscle cells.</title>
        <authorList>
            <person name="Sundaram P."/>
            <person name="Pang Z."/>
            <person name="Miao M."/>
            <person name="Yu L."/>
            <person name="Wing S.S."/>
        </authorList>
    </citation>
    <scope>FUNCTION</scope>
</reference>
<reference key="4">
    <citation type="journal article" date="2009" name="Mol. Cell. Biol.">
        <title>USP19 deubiquitinating enzyme supports cell proliferation by stabilizing KPC1, a ubiquitin ligase for p27Kip1.</title>
        <authorList>
            <person name="Lu Y."/>
            <person name="Adegoke O.A.J."/>
            <person name="Nepveu A."/>
            <person name="Nakayama K.I."/>
            <person name="Bedard N."/>
            <person name="Cheng D."/>
            <person name="Peng J."/>
            <person name="Wing S.S."/>
        </authorList>
    </citation>
    <scope>FUNCTION</scope>
    <scope>SUBCELLULAR LOCATION</scope>
    <scope>INTERACTION WITH RNF123</scope>
    <scope>MUTAGENESIS OF CYS-545</scope>
</reference>
<reference key="5">
    <citation type="journal article" date="2012" name="Nat. Commun.">
        <title>Quantitative maps of protein phosphorylation sites across 14 different rat organs and tissues.</title>
        <authorList>
            <person name="Lundby A."/>
            <person name="Secher A."/>
            <person name="Lage K."/>
            <person name="Nordsborg N.B."/>
            <person name="Dmytriyev A."/>
            <person name="Lundby C."/>
            <person name="Olsen J.V."/>
        </authorList>
    </citation>
    <scope>PHOSPHORYLATION [LARGE SCALE ANALYSIS] AT SER-283</scope>
    <scope>IDENTIFICATION BY MASS SPECTROMETRY [LARGE SCALE ANALYSIS]</scope>
</reference>
<name>UBP19_RAT</name>
<gene>
    <name type="primary">Usp19</name>
</gene>
<proteinExistence type="evidence at protein level"/>
<comment type="function">
    <text evidence="1 2 10 11">Deubiquitinating enzyme that regulates the degradation of various proteins by removing ubiquitin moieties, thereby preventing their proteasomal degradation. Stabilizes RNF123, which promotes CDKN1B degradation and contributes to cell proliferation (PubMed:19015242). Decreases the levels of ubiquitinated proteins during skeletal muscle formation and acts to repress myogenesis. Modulates transcription of major myofibrillar proteins (PubMed:19773579). Also involved in turnover of endoplasmic-reticulum-associated degradation (ERAD) substrates (By similarity). Mechanistically, deubiquitinates and thereby stabilizes several E3 ligases involved in the ERAD pathway including SYVN1 or MARCHF6 (By similarity). Regulates the stability of other E3 ligases including BIRC2/c-IAP1 and BIRC3/c-IAP2 by preventing their ubiquitination. Required for cells to mount an appropriate response to hypoxia by rescuing HIF1A from degradation in a non-catalytic manner and by mediating the deubiquitination of FUNDC1. Attenuates mitochondrial damage and ferroptosis by targeting and stabilizing NADPH oxidase 4/NOX4 (By similarity). Negatively regulates TNF-alpha- and IL-1beta-triggered NF-kappa-B activation by hydrolyzing 'Lys-27'- and 'Lys-63'-linked polyubiquitin chains from MAP3K7 (By similarity). Modulates also the protein level and aggregation of polyQ-expanded huntingtin/HTT through HSP90AA1 (By similarity).</text>
</comment>
<comment type="catalytic activity">
    <reaction evidence="1">
        <text>Thiol-dependent hydrolysis of ester, thioester, amide, peptide and isopeptide bonds formed by the C-terminal Gly of ubiquitin (a 76-residue protein attached to proteins as an intracellular targeting signal).</text>
        <dbReference type="EC" id="3.4.19.12"/>
    </reaction>
</comment>
<comment type="subunit">
    <text evidence="1">Interacts with RNF123 (By similarity). Interacts with BIRC2/c-IAP1, BIRC3/c-IAP2 and XIAP/BIRC4. Interacts with HIF1A (via N-terminus) (By similarity).</text>
</comment>
<comment type="subcellular location">
    <subcellularLocation>
        <location evidence="10">Endoplasmic reticulum membrane</location>
        <topology evidence="10">Single-pass membrane protein</topology>
    </subcellularLocation>
    <text evidence="1">Accumulates in the mitochondria-associated ER membrane (MAM) in response to hypoxia.</text>
</comment>
<comment type="tissue specificity">
    <text evidence="9">Expressed in testis, heart, kidney and skeletal muscle. Low levels of expression are detectable in all other tissues screened.</text>
</comment>
<comment type="induction">
    <text evidence="9">By streptozotocin and fasting in skeletal muscle.</text>
</comment>